<protein>
    <recommendedName>
        <fullName evidence="1">Oxygen-dependent choline dehydrogenase</fullName>
        <shortName evidence="1">CDH</shortName>
        <shortName evidence="1">CHD</shortName>
        <ecNumber evidence="1">1.1.99.1</ecNumber>
    </recommendedName>
    <alternativeName>
        <fullName evidence="1">Betaine aldehyde dehydrogenase</fullName>
        <shortName evidence="1">BADH</shortName>
        <ecNumber evidence="1">1.2.1.8</ecNumber>
    </alternativeName>
</protein>
<dbReference type="EC" id="1.1.99.1" evidence="1"/>
<dbReference type="EC" id="1.2.1.8" evidence="1"/>
<dbReference type="EMBL" id="CP000029">
    <property type="protein sequence ID" value="AAW52969.1"/>
    <property type="molecule type" value="Genomic_DNA"/>
</dbReference>
<dbReference type="RefSeq" id="WP_010959300.1">
    <property type="nucleotide sequence ID" value="NC_002976.3"/>
</dbReference>
<dbReference type="SMR" id="Q5HL11"/>
<dbReference type="STRING" id="176279.SERP2176"/>
<dbReference type="KEGG" id="ser:SERP2176"/>
<dbReference type="eggNOG" id="COG2303">
    <property type="taxonomic scope" value="Bacteria"/>
</dbReference>
<dbReference type="HOGENOM" id="CLU_002865_7_1_9"/>
<dbReference type="UniPathway" id="UPA00529">
    <property type="reaction ID" value="UER00385"/>
</dbReference>
<dbReference type="Proteomes" id="UP000000531">
    <property type="component" value="Chromosome"/>
</dbReference>
<dbReference type="GO" id="GO:0016020">
    <property type="term" value="C:membrane"/>
    <property type="evidence" value="ECO:0007669"/>
    <property type="project" value="TreeGrafter"/>
</dbReference>
<dbReference type="GO" id="GO:0008802">
    <property type="term" value="F:betaine-aldehyde dehydrogenase (NAD+) activity"/>
    <property type="evidence" value="ECO:0007669"/>
    <property type="project" value="UniProtKB-EC"/>
</dbReference>
<dbReference type="GO" id="GO:0008812">
    <property type="term" value="F:choline dehydrogenase activity"/>
    <property type="evidence" value="ECO:0007669"/>
    <property type="project" value="UniProtKB-UniRule"/>
</dbReference>
<dbReference type="GO" id="GO:0050660">
    <property type="term" value="F:flavin adenine dinucleotide binding"/>
    <property type="evidence" value="ECO:0007669"/>
    <property type="project" value="InterPro"/>
</dbReference>
<dbReference type="GO" id="GO:0019285">
    <property type="term" value="P:glycine betaine biosynthetic process from choline"/>
    <property type="evidence" value="ECO:0007669"/>
    <property type="project" value="UniProtKB-UniRule"/>
</dbReference>
<dbReference type="Gene3D" id="3.50.50.60">
    <property type="entry name" value="FAD/NAD(P)-binding domain"/>
    <property type="match status" value="1"/>
</dbReference>
<dbReference type="Gene3D" id="3.30.560.10">
    <property type="entry name" value="Glucose Oxidase, domain 3"/>
    <property type="match status" value="1"/>
</dbReference>
<dbReference type="HAMAP" id="MF_00750">
    <property type="entry name" value="Choline_dehydrogen"/>
    <property type="match status" value="1"/>
</dbReference>
<dbReference type="InterPro" id="IPR011533">
    <property type="entry name" value="BetA"/>
</dbReference>
<dbReference type="InterPro" id="IPR036188">
    <property type="entry name" value="FAD/NAD-bd_sf"/>
</dbReference>
<dbReference type="InterPro" id="IPR012132">
    <property type="entry name" value="GMC_OxRdtase"/>
</dbReference>
<dbReference type="InterPro" id="IPR000172">
    <property type="entry name" value="GMC_OxRdtase_N"/>
</dbReference>
<dbReference type="InterPro" id="IPR007867">
    <property type="entry name" value="GMC_OxRtase_C"/>
</dbReference>
<dbReference type="NCBIfam" id="TIGR01810">
    <property type="entry name" value="betA"/>
    <property type="match status" value="1"/>
</dbReference>
<dbReference type="NCBIfam" id="NF002550">
    <property type="entry name" value="PRK02106.1"/>
    <property type="match status" value="1"/>
</dbReference>
<dbReference type="PANTHER" id="PTHR11552:SF147">
    <property type="entry name" value="CHOLINE DEHYDROGENASE, MITOCHONDRIAL"/>
    <property type="match status" value="1"/>
</dbReference>
<dbReference type="PANTHER" id="PTHR11552">
    <property type="entry name" value="GLUCOSE-METHANOL-CHOLINE GMC OXIDOREDUCTASE"/>
    <property type="match status" value="1"/>
</dbReference>
<dbReference type="Pfam" id="PF05199">
    <property type="entry name" value="GMC_oxred_C"/>
    <property type="match status" value="1"/>
</dbReference>
<dbReference type="Pfam" id="PF00732">
    <property type="entry name" value="GMC_oxred_N"/>
    <property type="match status" value="1"/>
</dbReference>
<dbReference type="PIRSF" id="PIRSF000137">
    <property type="entry name" value="Alcohol_oxidase"/>
    <property type="match status" value="1"/>
</dbReference>
<dbReference type="SUPFAM" id="SSF54373">
    <property type="entry name" value="FAD-linked reductases, C-terminal domain"/>
    <property type="match status" value="1"/>
</dbReference>
<dbReference type="SUPFAM" id="SSF51905">
    <property type="entry name" value="FAD/NAD(P)-binding domain"/>
    <property type="match status" value="1"/>
</dbReference>
<dbReference type="PROSITE" id="PS00623">
    <property type="entry name" value="GMC_OXRED_1"/>
    <property type="match status" value="1"/>
</dbReference>
<dbReference type="PROSITE" id="PS00624">
    <property type="entry name" value="GMC_OXRED_2"/>
    <property type="match status" value="1"/>
</dbReference>
<comment type="function">
    <text evidence="1">Involved in the biosynthesis of the osmoprotectant glycine betaine. Catalyzes the oxidation of choline to betaine aldehyde and betaine aldehyde to glycine betaine at the same rate.</text>
</comment>
<comment type="catalytic activity">
    <reaction evidence="1">
        <text>choline + A = betaine aldehyde + AH2</text>
        <dbReference type="Rhea" id="RHEA:17433"/>
        <dbReference type="ChEBI" id="CHEBI:13193"/>
        <dbReference type="ChEBI" id="CHEBI:15354"/>
        <dbReference type="ChEBI" id="CHEBI:15710"/>
        <dbReference type="ChEBI" id="CHEBI:17499"/>
        <dbReference type="EC" id="1.1.99.1"/>
    </reaction>
</comment>
<comment type="catalytic activity">
    <reaction evidence="1">
        <text>betaine aldehyde + NAD(+) + H2O = glycine betaine + NADH + 2 H(+)</text>
        <dbReference type="Rhea" id="RHEA:15305"/>
        <dbReference type="ChEBI" id="CHEBI:15377"/>
        <dbReference type="ChEBI" id="CHEBI:15378"/>
        <dbReference type="ChEBI" id="CHEBI:15710"/>
        <dbReference type="ChEBI" id="CHEBI:17750"/>
        <dbReference type="ChEBI" id="CHEBI:57540"/>
        <dbReference type="ChEBI" id="CHEBI:57945"/>
        <dbReference type="EC" id="1.2.1.8"/>
    </reaction>
</comment>
<comment type="cofactor">
    <cofactor evidence="1">
        <name>FAD</name>
        <dbReference type="ChEBI" id="CHEBI:57692"/>
    </cofactor>
</comment>
<comment type="pathway">
    <text evidence="1">Amine and polyamine biosynthesis; betaine biosynthesis via choline pathway; betaine aldehyde from choline (cytochrome c reductase route): step 1/1.</text>
</comment>
<comment type="similarity">
    <text evidence="1">Belongs to the GMC oxidoreductase family.</text>
</comment>
<sequence>MRRKRDSYDYVIIGGGSAGSVLGARLSEDKDKNVLVLEAGRSDYFWDLFIQMPAALMFPSGNRFYDWEYQTDEEPHMGRRVDHARGKVLGGSSSINGMIYQRGNPMDYEGWAEPEGMDTWDFAHCLPYFKKLETTYGAAPYDKVRGHDGPIKLKRGPATNPLFKSFFNAGVEAGYHKTADVNGYRQEGFGPFDSQVHHGRRMSASRAYLRPALRRRNLDVETRAFVTKLIFDENNSKKVTGVTFKKNGKEHTVHANEVILSGGAFNTPQLLQLSGIGDSEFLKSKGIEPRMHLPGVGENFEDHLEVYIQHKCKQPVSLQPSLDVKRMPFIGLQWIFARKGAAASNHFEGGGFVRSNDDVDYPNLMFHFLPIAVRYDGQKAPVAHGYQVHVGPMYSNSRGSLKIKSKDPFEKPSIVFNYLSTKEDEREWIEAIRVARNILKQKAMDPFNGGEISPGPQVQTDEEILDWVRKDGETALHPSCSAKMGPASDPMAVVDPLTMKVHGMENLRVVDASAMPRTTNGNIHAPVLMLAEKAADIIRGRKPLEPQYVDYYKHGIDDEKAGAMEDDPFYQY</sequence>
<gene>
    <name evidence="1" type="primary">betA</name>
    <name type="ordered locus">SERP2176</name>
</gene>
<accession>Q5HL11</accession>
<feature type="chain" id="PRO_0000205602" description="Oxygen-dependent choline dehydrogenase">
    <location>
        <begin position="1"/>
        <end position="572"/>
    </location>
</feature>
<feature type="active site" description="Proton acceptor" evidence="1">
    <location>
        <position position="477"/>
    </location>
</feature>
<feature type="binding site" evidence="1">
    <location>
        <begin position="9"/>
        <end position="38"/>
    </location>
    <ligand>
        <name>FAD</name>
        <dbReference type="ChEBI" id="CHEBI:57692"/>
    </ligand>
</feature>
<proteinExistence type="inferred from homology"/>
<evidence type="ECO:0000255" key="1">
    <source>
        <dbReference type="HAMAP-Rule" id="MF_00750"/>
    </source>
</evidence>
<name>BETA_STAEQ</name>
<reference key="1">
    <citation type="journal article" date="2005" name="J. Bacteriol.">
        <title>Insights on evolution of virulence and resistance from the complete genome analysis of an early methicillin-resistant Staphylococcus aureus strain and a biofilm-producing methicillin-resistant Staphylococcus epidermidis strain.</title>
        <authorList>
            <person name="Gill S.R."/>
            <person name="Fouts D.E."/>
            <person name="Archer G.L."/>
            <person name="Mongodin E.F."/>
            <person name="DeBoy R.T."/>
            <person name="Ravel J."/>
            <person name="Paulsen I.T."/>
            <person name="Kolonay J.F."/>
            <person name="Brinkac L.M."/>
            <person name="Beanan M.J."/>
            <person name="Dodson R.J."/>
            <person name="Daugherty S.C."/>
            <person name="Madupu R."/>
            <person name="Angiuoli S.V."/>
            <person name="Durkin A.S."/>
            <person name="Haft D.H."/>
            <person name="Vamathevan J.J."/>
            <person name="Khouri H."/>
            <person name="Utterback T.R."/>
            <person name="Lee C."/>
            <person name="Dimitrov G."/>
            <person name="Jiang L."/>
            <person name="Qin H."/>
            <person name="Weidman J."/>
            <person name="Tran K."/>
            <person name="Kang K.H."/>
            <person name="Hance I.R."/>
            <person name="Nelson K.E."/>
            <person name="Fraser C.M."/>
        </authorList>
    </citation>
    <scope>NUCLEOTIDE SEQUENCE [LARGE SCALE GENOMIC DNA]</scope>
    <source>
        <strain>ATCC 35984 / DSM 28319 / BCRC 17069 / CCUG 31568 / BM 3577 / RP62A</strain>
    </source>
</reference>
<keyword id="KW-0274">FAD</keyword>
<keyword id="KW-0285">Flavoprotein</keyword>
<keyword id="KW-0520">NAD</keyword>
<keyword id="KW-0560">Oxidoreductase</keyword>
<keyword id="KW-1185">Reference proteome</keyword>
<organism>
    <name type="scientific">Staphylococcus epidermidis (strain ATCC 35984 / DSM 28319 / BCRC 17069 / CCUG 31568 / BM 3577 / RP62A)</name>
    <dbReference type="NCBI Taxonomy" id="176279"/>
    <lineage>
        <taxon>Bacteria</taxon>
        <taxon>Bacillati</taxon>
        <taxon>Bacillota</taxon>
        <taxon>Bacilli</taxon>
        <taxon>Bacillales</taxon>
        <taxon>Staphylococcaceae</taxon>
        <taxon>Staphylococcus</taxon>
    </lineage>
</organism>